<name>IF1_MALP2</name>
<accession>Q8EUD5</accession>
<protein>
    <recommendedName>
        <fullName evidence="1">Translation initiation factor IF-1</fullName>
    </recommendedName>
</protein>
<sequence>MSKEGKITLKGKVVTALQGGQFKVLLENNVEIIANVSGKIRVYKIQILKGDTVEVELSPYDLTRGRIIYRIS</sequence>
<feature type="chain" id="PRO_0000095824" description="Translation initiation factor IF-1">
    <location>
        <begin position="1"/>
        <end position="72"/>
    </location>
</feature>
<feature type="domain" description="S1-like" evidence="1">
    <location>
        <begin position="1"/>
        <end position="72"/>
    </location>
</feature>
<reference key="1">
    <citation type="journal article" date="2002" name="Nucleic Acids Res.">
        <title>The complete genomic sequence of Mycoplasma penetrans, an intracellular bacterial pathogen in humans.</title>
        <authorList>
            <person name="Sasaki Y."/>
            <person name="Ishikawa J."/>
            <person name="Yamashita A."/>
            <person name="Oshima K."/>
            <person name="Kenri T."/>
            <person name="Furuya K."/>
            <person name="Yoshino C."/>
            <person name="Horino A."/>
            <person name="Shiba T."/>
            <person name="Sasaki T."/>
            <person name="Hattori M."/>
        </authorList>
    </citation>
    <scope>NUCLEOTIDE SEQUENCE [LARGE SCALE GENOMIC DNA]</scope>
    <source>
        <strain>HF-2</strain>
    </source>
</reference>
<keyword id="KW-0963">Cytoplasm</keyword>
<keyword id="KW-0396">Initiation factor</keyword>
<keyword id="KW-0648">Protein biosynthesis</keyword>
<keyword id="KW-1185">Reference proteome</keyword>
<keyword id="KW-0694">RNA-binding</keyword>
<keyword id="KW-0699">rRNA-binding</keyword>
<dbReference type="EMBL" id="BA000026">
    <property type="protein sequence ID" value="BAC44781.1"/>
    <property type="molecule type" value="Genomic_DNA"/>
</dbReference>
<dbReference type="RefSeq" id="WP_011077809.1">
    <property type="nucleotide sequence ID" value="NC_004432.1"/>
</dbReference>
<dbReference type="SMR" id="Q8EUD5"/>
<dbReference type="FunCoup" id="Q8EUD5">
    <property type="interactions" value="147"/>
</dbReference>
<dbReference type="STRING" id="272633.gene:10732115"/>
<dbReference type="KEGG" id="mpe:MYPE9950"/>
<dbReference type="eggNOG" id="COG0361">
    <property type="taxonomic scope" value="Bacteria"/>
</dbReference>
<dbReference type="HOGENOM" id="CLU_151267_1_0_14"/>
<dbReference type="InParanoid" id="Q8EUD5"/>
<dbReference type="Proteomes" id="UP000002522">
    <property type="component" value="Chromosome"/>
</dbReference>
<dbReference type="GO" id="GO:0005829">
    <property type="term" value="C:cytosol"/>
    <property type="evidence" value="ECO:0007669"/>
    <property type="project" value="TreeGrafter"/>
</dbReference>
<dbReference type="GO" id="GO:0043022">
    <property type="term" value="F:ribosome binding"/>
    <property type="evidence" value="ECO:0007669"/>
    <property type="project" value="UniProtKB-UniRule"/>
</dbReference>
<dbReference type="GO" id="GO:0019843">
    <property type="term" value="F:rRNA binding"/>
    <property type="evidence" value="ECO:0007669"/>
    <property type="project" value="UniProtKB-UniRule"/>
</dbReference>
<dbReference type="GO" id="GO:0003743">
    <property type="term" value="F:translation initiation factor activity"/>
    <property type="evidence" value="ECO:0007669"/>
    <property type="project" value="UniProtKB-UniRule"/>
</dbReference>
<dbReference type="CDD" id="cd04451">
    <property type="entry name" value="S1_IF1"/>
    <property type="match status" value="1"/>
</dbReference>
<dbReference type="FunFam" id="2.40.50.140:FF:000002">
    <property type="entry name" value="Translation initiation factor IF-1"/>
    <property type="match status" value="1"/>
</dbReference>
<dbReference type="Gene3D" id="2.40.50.140">
    <property type="entry name" value="Nucleic acid-binding proteins"/>
    <property type="match status" value="1"/>
</dbReference>
<dbReference type="HAMAP" id="MF_00075">
    <property type="entry name" value="IF_1"/>
    <property type="match status" value="1"/>
</dbReference>
<dbReference type="InterPro" id="IPR012340">
    <property type="entry name" value="NA-bd_OB-fold"/>
</dbReference>
<dbReference type="InterPro" id="IPR006196">
    <property type="entry name" value="RNA-binding_domain_S1_IF1"/>
</dbReference>
<dbReference type="InterPro" id="IPR004368">
    <property type="entry name" value="TIF_IF1"/>
</dbReference>
<dbReference type="NCBIfam" id="TIGR00008">
    <property type="entry name" value="infA"/>
    <property type="match status" value="1"/>
</dbReference>
<dbReference type="PANTHER" id="PTHR33370">
    <property type="entry name" value="TRANSLATION INITIATION FACTOR IF-1, CHLOROPLASTIC"/>
    <property type="match status" value="1"/>
</dbReference>
<dbReference type="PANTHER" id="PTHR33370:SF1">
    <property type="entry name" value="TRANSLATION INITIATION FACTOR IF-1, CHLOROPLASTIC"/>
    <property type="match status" value="1"/>
</dbReference>
<dbReference type="Pfam" id="PF01176">
    <property type="entry name" value="eIF-1a"/>
    <property type="match status" value="1"/>
</dbReference>
<dbReference type="SUPFAM" id="SSF50249">
    <property type="entry name" value="Nucleic acid-binding proteins"/>
    <property type="match status" value="1"/>
</dbReference>
<dbReference type="PROSITE" id="PS50832">
    <property type="entry name" value="S1_IF1_TYPE"/>
    <property type="match status" value="1"/>
</dbReference>
<comment type="function">
    <text evidence="1">One of the essential components for the initiation of protein synthesis. Stabilizes the binding of IF-2 and IF-3 on the 30S subunit to which N-formylmethionyl-tRNA(fMet) subsequently binds. Helps modulate mRNA selection, yielding the 30S pre-initiation complex (PIC). Upon addition of the 50S ribosomal subunit IF-1, IF-2 and IF-3 are released leaving the mature 70S translation initiation complex.</text>
</comment>
<comment type="subunit">
    <text evidence="1">Component of the 30S ribosomal translation pre-initiation complex which assembles on the 30S ribosome in the order IF-2 and IF-3, IF-1 and N-formylmethionyl-tRNA(fMet); mRNA recruitment can occur at any time during PIC assembly.</text>
</comment>
<comment type="subcellular location">
    <subcellularLocation>
        <location evidence="1">Cytoplasm</location>
    </subcellularLocation>
</comment>
<comment type="similarity">
    <text evidence="1">Belongs to the IF-1 family.</text>
</comment>
<gene>
    <name evidence="1" type="primary">infA</name>
    <name type="ordered locus">MYPE9950</name>
</gene>
<proteinExistence type="inferred from homology"/>
<evidence type="ECO:0000255" key="1">
    <source>
        <dbReference type="HAMAP-Rule" id="MF_00075"/>
    </source>
</evidence>
<organism>
    <name type="scientific">Malacoplasma penetrans (strain HF-2)</name>
    <name type="common">Mycoplasma penetrans</name>
    <dbReference type="NCBI Taxonomy" id="272633"/>
    <lineage>
        <taxon>Bacteria</taxon>
        <taxon>Bacillati</taxon>
        <taxon>Mycoplasmatota</taxon>
        <taxon>Mycoplasmoidales</taxon>
        <taxon>Mycoplasmoidaceae</taxon>
        <taxon>Malacoplasma</taxon>
    </lineage>
</organism>